<organism>
    <name type="scientific">Acidovorax sp. (strain JS42)</name>
    <dbReference type="NCBI Taxonomy" id="232721"/>
    <lineage>
        <taxon>Bacteria</taxon>
        <taxon>Pseudomonadati</taxon>
        <taxon>Pseudomonadota</taxon>
        <taxon>Betaproteobacteria</taxon>
        <taxon>Burkholderiales</taxon>
        <taxon>Comamonadaceae</taxon>
        <taxon>Acidovorax</taxon>
    </lineage>
</organism>
<sequence length="148" mass="15696">MTKTVYVLNGPNLNLLGTREPQVYGSQTLADVEQLCTAACARHGLALVFRQSNHEGALVDWIHEAGRLHAAGQLAGVVLNAAAYTHTSVALLDAVKGTGVPVVELHISNVHARESFRHHSYLAGAARAVMCGFGVQGYALAIDGLAQW</sequence>
<proteinExistence type="inferred from homology"/>
<comment type="function">
    <text evidence="1">Catalyzes a trans-dehydration via an enolate intermediate.</text>
</comment>
<comment type="catalytic activity">
    <reaction evidence="1">
        <text>3-dehydroquinate = 3-dehydroshikimate + H2O</text>
        <dbReference type="Rhea" id="RHEA:21096"/>
        <dbReference type="ChEBI" id="CHEBI:15377"/>
        <dbReference type="ChEBI" id="CHEBI:16630"/>
        <dbReference type="ChEBI" id="CHEBI:32364"/>
        <dbReference type="EC" id="4.2.1.10"/>
    </reaction>
</comment>
<comment type="pathway">
    <text evidence="1">Metabolic intermediate biosynthesis; chorismate biosynthesis; chorismate from D-erythrose 4-phosphate and phosphoenolpyruvate: step 3/7.</text>
</comment>
<comment type="subunit">
    <text evidence="1">Homododecamer.</text>
</comment>
<comment type="similarity">
    <text evidence="1">Belongs to the type-II 3-dehydroquinase family.</text>
</comment>
<reference key="1">
    <citation type="submission" date="2006-12" db="EMBL/GenBank/DDBJ databases">
        <title>Complete sequence of chromosome 1 of Acidovorax sp. JS42.</title>
        <authorList>
            <person name="Copeland A."/>
            <person name="Lucas S."/>
            <person name="Lapidus A."/>
            <person name="Barry K."/>
            <person name="Detter J.C."/>
            <person name="Glavina del Rio T."/>
            <person name="Dalin E."/>
            <person name="Tice H."/>
            <person name="Pitluck S."/>
            <person name="Chertkov O."/>
            <person name="Brettin T."/>
            <person name="Bruce D."/>
            <person name="Han C."/>
            <person name="Tapia R."/>
            <person name="Gilna P."/>
            <person name="Schmutz J."/>
            <person name="Larimer F."/>
            <person name="Land M."/>
            <person name="Hauser L."/>
            <person name="Kyrpides N."/>
            <person name="Kim E."/>
            <person name="Stahl D."/>
            <person name="Richardson P."/>
        </authorList>
    </citation>
    <scope>NUCLEOTIDE SEQUENCE [LARGE SCALE GENOMIC DNA]</scope>
    <source>
        <strain>JS42</strain>
    </source>
</reference>
<evidence type="ECO:0000255" key="1">
    <source>
        <dbReference type="HAMAP-Rule" id="MF_00169"/>
    </source>
</evidence>
<accession>A1W6C8</accession>
<protein>
    <recommendedName>
        <fullName evidence="1">3-dehydroquinate dehydratase</fullName>
        <shortName evidence="1">3-dehydroquinase</shortName>
        <ecNumber evidence="1">4.2.1.10</ecNumber>
    </recommendedName>
    <alternativeName>
        <fullName evidence="1">Type II DHQase</fullName>
    </alternativeName>
</protein>
<dbReference type="EC" id="4.2.1.10" evidence="1"/>
<dbReference type="EMBL" id="CP000539">
    <property type="protein sequence ID" value="ABM41803.1"/>
    <property type="molecule type" value="Genomic_DNA"/>
</dbReference>
<dbReference type="SMR" id="A1W6C8"/>
<dbReference type="STRING" id="232721.Ajs_1610"/>
<dbReference type="KEGG" id="ajs:Ajs_1610"/>
<dbReference type="eggNOG" id="COG0757">
    <property type="taxonomic scope" value="Bacteria"/>
</dbReference>
<dbReference type="HOGENOM" id="CLU_090968_2_0_4"/>
<dbReference type="UniPathway" id="UPA00053">
    <property type="reaction ID" value="UER00086"/>
</dbReference>
<dbReference type="Proteomes" id="UP000000645">
    <property type="component" value="Chromosome"/>
</dbReference>
<dbReference type="GO" id="GO:0003855">
    <property type="term" value="F:3-dehydroquinate dehydratase activity"/>
    <property type="evidence" value="ECO:0007669"/>
    <property type="project" value="UniProtKB-UniRule"/>
</dbReference>
<dbReference type="GO" id="GO:0008652">
    <property type="term" value="P:amino acid biosynthetic process"/>
    <property type="evidence" value="ECO:0007669"/>
    <property type="project" value="UniProtKB-KW"/>
</dbReference>
<dbReference type="GO" id="GO:0009073">
    <property type="term" value="P:aromatic amino acid family biosynthetic process"/>
    <property type="evidence" value="ECO:0007669"/>
    <property type="project" value="UniProtKB-KW"/>
</dbReference>
<dbReference type="GO" id="GO:0009423">
    <property type="term" value="P:chorismate biosynthetic process"/>
    <property type="evidence" value="ECO:0007669"/>
    <property type="project" value="UniProtKB-UniRule"/>
</dbReference>
<dbReference type="GO" id="GO:0019631">
    <property type="term" value="P:quinate catabolic process"/>
    <property type="evidence" value="ECO:0007669"/>
    <property type="project" value="TreeGrafter"/>
</dbReference>
<dbReference type="CDD" id="cd00466">
    <property type="entry name" value="DHQase_II"/>
    <property type="match status" value="1"/>
</dbReference>
<dbReference type="Gene3D" id="3.40.50.9100">
    <property type="entry name" value="Dehydroquinase, class II"/>
    <property type="match status" value="1"/>
</dbReference>
<dbReference type="HAMAP" id="MF_00169">
    <property type="entry name" value="AroQ"/>
    <property type="match status" value="1"/>
</dbReference>
<dbReference type="InterPro" id="IPR001874">
    <property type="entry name" value="DHquinase_II"/>
</dbReference>
<dbReference type="InterPro" id="IPR018509">
    <property type="entry name" value="DHquinase_II_CS"/>
</dbReference>
<dbReference type="InterPro" id="IPR036441">
    <property type="entry name" value="DHquinase_II_sf"/>
</dbReference>
<dbReference type="NCBIfam" id="TIGR01088">
    <property type="entry name" value="aroQ"/>
    <property type="match status" value="1"/>
</dbReference>
<dbReference type="NCBIfam" id="NF003805">
    <property type="entry name" value="PRK05395.1-2"/>
    <property type="match status" value="1"/>
</dbReference>
<dbReference type="NCBIfam" id="NF003806">
    <property type="entry name" value="PRK05395.1-3"/>
    <property type="match status" value="1"/>
</dbReference>
<dbReference type="NCBIfam" id="NF003807">
    <property type="entry name" value="PRK05395.1-4"/>
    <property type="match status" value="1"/>
</dbReference>
<dbReference type="PANTHER" id="PTHR21272">
    <property type="entry name" value="CATABOLIC 3-DEHYDROQUINASE"/>
    <property type="match status" value="1"/>
</dbReference>
<dbReference type="PANTHER" id="PTHR21272:SF3">
    <property type="entry name" value="CATABOLIC 3-DEHYDROQUINASE"/>
    <property type="match status" value="1"/>
</dbReference>
<dbReference type="Pfam" id="PF01220">
    <property type="entry name" value="DHquinase_II"/>
    <property type="match status" value="1"/>
</dbReference>
<dbReference type="PIRSF" id="PIRSF001399">
    <property type="entry name" value="DHquinase_II"/>
    <property type="match status" value="1"/>
</dbReference>
<dbReference type="SUPFAM" id="SSF52304">
    <property type="entry name" value="Type II 3-dehydroquinate dehydratase"/>
    <property type="match status" value="1"/>
</dbReference>
<dbReference type="PROSITE" id="PS01029">
    <property type="entry name" value="DEHYDROQUINASE_II"/>
    <property type="match status" value="1"/>
</dbReference>
<keyword id="KW-0028">Amino-acid biosynthesis</keyword>
<keyword id="KW-0057">Aromatic amino acid biosynthesis</keyword>
<keyword id="KW-0456">Lyase</keyword>
<feature type="chain" id="PRO_1000023445" description="3-dehydroquinate dehydratase">
    <location>
        <begin position="1"/>
        <end position="148"/>
    </location>
</feature>
<feature type="active site" description="Proton acceptor" evidence="1">
    <location>
        <position position="24"/>
    </location>
</feature>
<feature type="active site" description="Proton donor" evidence="1">
    <location>
        <position position="106"/>
    </location>
</feature>
<feature type="binding site" evidence="1">
    <location>
        <position position="80"/>
    </location>
    <ligand>
        <name>substrate</name>
    </ligand>
</feature>
<feature type="binding site" evidence="1">
    <location>
        <position position="86"/>
    </location>
    <ligand>
        <name>substrate</name>
    </ligand>
</feature>
<feature type="binding site" evidence="1">
    <location>
        <position position="93"/>
    </location>
    <ligand>
        <name>substrate</name>
    </ligand>
</feature>
<feature type="binding site" evidence="1">
    <location>
        <begin position="107"/>
        <end position="108"/>
    </location>
    <ligand>
        <name>substrate</name>
    </ligand>
</feature>
<feature type="binding site" evidence="1">
    <location>
        <position position="117"/>
    </location>
    <ligand>
        <name>substrate</name>
    </ligand>
</feature>
<feature type="site" description="Transition state stabilizer" evidence="1">
    <location>
        <position position="19"/>
    </location>
</feature>
<gene>
    <name evidence="1" type="primary">aroQ</name>
    <name type="ordered locus">Ajs_1610</name>
</gene>
<name>AROQ_ACISJ</name>